<gene>
    <name evidence="1" type="primary">queC</name>
    <name type="ordered locus">BCQ_1413</name>
</gene>
<proteinExistence type="inferred from homology"/>
<accession>B9IUT0</accession>
<feature type="chain" id="PRO_1000186560" description="7-cyano-7-deazaguanine synthase">
    <location>
        <begin position="1"/>
        <end position="220"/>
    </location>
</feature>
<feature type="binding site" evidence="1">
    <location>
        <begin position="10"/>
        <end position="20"/>
    </location>
    <ligand>
        <name>ATP</name>
        <dbReference type="ChEBI" id="CHEBI:30616"/>
    </ligand>
</feature>
<feature type="binding site" evidence="1">
    <location>
        <position position="186"/>
    </location>
    <ligand>
        <name>Zn(2+)</name>
        <dbReference type="ChEBI" id="CHEBI:29105"/>
    </ligand>
</feature>
<feature type="binding site" evidence="1">
    <location>
        <position position="195"/>
    </location>
    <ligand>
        <name>Zn(2+)</name>
        <dbReference type="ChEBI" id="CHEBI:29105"/>
    </ligand>
</feature>
<feature type="binding site" evidence="1">
    <location>
        <position position="198"/>
    </location>
    <ligand>
        <name>Zn(2+)</name>
        <dbReference type="ChEBI" id="CHEBI:29105"/>
    </ligand>
</feature>
<feature type="binding site" evidence="1">
    <location>
        <position position="201"/>
    </location>
    <ligand>
        <name>Zn(2+)</name>
        <dbReference type="ChEBI" id="CHEBI:29105"/>
    </ligand>
</feature>
<sequence>MKKEKAVVVFSGGQDSTTCLFWAMEQFAEVEAVTFNYNQRHKLEIDCAAEIAKELGIKHTVLDMSLLNQLAPNALTRTDMEITHEEGELPSTFVDGRNLLFLSFAAVLAKQVGARHIVTGVCETDFSGYPDCRDVFVKSLNVTLNLSMDYPFVIHTPLMWIDKAETWKLSDELGAFEFVREKTLTCYNGIIGDGCGECPACQLRKAGLDTYLQEREGASN</sequence>
<name>QUEC_BACCQ</name>
<organism>
    <name type="scientific">Bacillus cereus (strain Q1)</name>
    <dbReference type="NCBI Taxonomy" id="361100"/>
    <lineage>
        <taxon>Bacteria</taxon>
        <taxon>Bacillati</taxon>
        <taxon>Bacillota</taxon>
        <taxon>Bacilli</taxon>
        <taxon>Bacillales</taxon>
        <taxon>Bacillaceae</taxon>
        <taxon>Bacillus</taxon>
        <taxon>Bacillus cereus group</taxon>
    </lineage>
</organism>
<keyword id="KW-0067">ATP-binding</keyword>
<keyword id="KW-0436">Ligase</keyword>
<keyword id="KW-0479">Metal-binding</keyword>
<keyword id="KW-0547">Nucleotide-binding</keyword>
<keyword id="KW-0671">Queuosine biosynthesis</keyword>
<keyword id="KW-0862">Zinc</keyword>
<reference key="1">
    <citation type="journal article" date="2009" name="J. Bacteriol.">
        <title>Complete genome sequence of the extremophilic Bacillus cereus strain Q1 with industrial applications.</title>
        <authorList>
            <person name="Xiong Z."/>
            <person name="Jiang Y."/>
            <person name="Qi D."/>
            <person name="Lu H."/>
            <person name="Yang F."/>
            <person name="Yang J."/>
            <person name="Chen L."/>
            <person name="Sun L."/>
            <person name="Xu X."/>
            <person name="Xue Y."/>
            <person name="Zhu Y."/>
            <person name="Jin Q."/>
        </authorList>
    </citation>
    <scope>NUCLEOTIDE SEQUENCE [LARGE SCALE GENOMIC DNA]</scope>
    <source>
        <strain>Q1</strain>
    </source>
</reference>
<dbReference type="EC" id="6.3.4.20" evidence="1"/>
<dbReference type="EMBL" id="CP000227">
    <property type="protein sequence ID" value="ACM11841.1"/>
    <property type="molecule type" value="Genomic_DNA"/>
</dbReference>
<dbReference type="SMR" id="B9IUT0"/>
<dbReference type="KEGG" id="bcq:BCQ_1413"/>
<dbReference type="HOGENOM" id="CLU_081854_0_0_9"/>
<dbReference type="UniPathway" id="UPA00391"/>
<dbReference type="Proteomes" id="UP000000441">
    <property type="component" value="Chromosome"/>
</dbReference>
<dbReference type="GO" id="GO:0005524">
    <property type="term" value="F:ATP binding"/>
    <property type="evidence" value="ECO:0007669"/>
    <property type="project" value="UniProtKB-UniRule"/>
</dbReference>
<dbReference type="GO" id="GO:0016879">
    <property type="term" value="F:ligase activity, forming carbon-nitrogen bonds"/>
    <property type="evidence" value="ECO:0007669"/>
    <property type="project" value="UniProtKB-UniRule"/>
</dbReference>
<dbReference type="GO" id="GO:0008270">
    <property type="term" value="F:zinc ion binding"/>
    <property type="evidence" value="ECO:0007669"/>
    <property type="project" value="UniProtKB-UniRule"/>
</dbReference>
<dbReference type="GO" id="GO:0008616">
    <property type="term" value="P:queuosine biosynthetic process"/>
    <property type="evidence" value="ECO:0007669"/>
    <property type="project" value="UniProtKB-UniRule"/>
</dbReference>
<dbReference type="CDD" id="cd01995">
    <property type="entry name" value="QueC-like"/>
    <property type="match status" value="1"/>
</dbReference>
<dbReference type="FunFam" id="3.40.50.620:FF:000017">
    <property type="entry name" value="7-cyano-7-deazaguanine synthase"/>
    <property type="match status" value="1"/>
</dbReference>
<dbReference type="Gene3D" id="3.40.50.620">
    <property type="entry name" value="HUPs"/>
    <property type="match status" value="1"/>
</dbReference>
<dbReference type="HAMAP" id="MF_01633">
    <property type="entry name" value="QueC"/>
    <property type="match status" value="1"/>
</dbReference>
<dbReference type="InterPro" id="IPR018317">
    <property type="entry name" value="QueC"/>
</dbReference>
<dbReference type="InterPro" id="IPR014729">
    <property type="entry name" value="Rossmann-like_a/b/a_fold"/>
</dbReference>
<dbReference type="NCBIfam" id="TIGR00364">
    <property type="entry name" value="7-cyano-7-deazaguanine synthase QueC"/>
    <property type="match status" value="1"/>
</dbReference>
<dbReference type="PANTHER" id="PTHR42914">
    <property type="entry name" value="7-CYANO-7-DEAZAGUANINE SYNTHASE"/>
    <property type="match status" value="1"/>
</dbReference>
<dbReference type="PANTHER" id="PTHR42914:SF1">
    <property type="entry name" value="7-CYANO-7-DEAZAGUANINE SYNTHASE"/>
    <property type="match status" value="1"/>
</dbReference>
<dbReference type="Pfam" id="PF06508">
    <property type="entry name" value="QueC"/>
    <property type="match status" value="1"/>
</dbReference>
<dbReference type="PIRSF" id="PIRSF006293">
    <property type="entry name" value="ExsB"/>
    <property type="match status" value="1"/>
</dbReference>
<dbReference type="SUPFAM" id="SSF52402">
    <property type="entry name" value="Adenine nucleotide alpha hydrolases-like"/>
    <property type="match status" value="1"/>
</dbReference>
<protein>
    <recommendedName>
        <fullName evidence="1">7-cyano-7-deazaguanine synthase</fullName>
        <ecNumber evidence="1">6.3.4.20</ecNumber>
    </recommendedName>
    <alternativeName>
        <fullName evidence="1">7-cyano-7-carbaguanine synthase</fullName>
    </alternativeName>
    <alternativeName>
        <fullName evidence="1">PreQ(0) synthase</fullName>
    </alternativeName>
    <alternativeName>
        <fullName evidence="1">Queuosine biosynthesis protein QueC</fullName>
    </alternativeName>
</protein>
<comment type="function">
    <text evidence="1">Catalyzes the ATP-dependent conversion of 7-carboxy-7-deazaguanine (CDG) to 7-cyano-7-deazaguanine (preQ(0)).</text>
</comment>
<comment type="catalytic activity">
    <reaction evidence="1">
        <text>7-carboxy-7-deazaguanine + NH4(+) + ATP = 7-cyano-7-deazaguanine + ADP + phosphate + H2O + H(+)</text>
        <dbReference type="Rhea" id="RHEA:27982"/>
        <dbReference type="ChEBI" id="CHEBI:15377"/>
        <dbReference type="ChEBI" id="CHEBI:15378"/>
        <dbReference type="ChEBI" id="CHEBI:28938"/>
        <dbReference type="ChEBI" id="CHEBI:30616"/>
        <dbReference type="ChEBI" id="CHEBI:43474"/>
        <dbReference type="ChEBI" id="CHEBI:45075"/>
        <dbReference type="ChEBI" id="CHEBI:61036"/>
        <dbReference type="ChEBI" id="CHEBI:456216"/>
        <dbReference type="EC" id="6.3.4.20"/>
    </reaction>
</comment>
<comment type="cofactor">
    <cofactor evidence="1">
        <name>Zn(2+)</name>
        <dbReference type="ChEBI" id="CHEBI:29105"/>
    </cofactor>
    <text evidence="1">Binds 1 zinc ion per subunit.</text>
</comment>
<comment type="pathway">
    <text evidence="1">Purine metabolism; 7-cyano-7-deazaguanine biosynthesis.</text>
</comment>
<comment type="subunit">
    <text evidence="1">Homodimer.</text>
</comment>
<comment type="similarity">
    <text evidence="1">Belongs to the QueC family.</text>
</comment>
<evidence type="ECO:0000255" key="1">
    <source>
        <dbReference type="HAMAP-Rule" id="MF_01633"/>
    </source>
</evidence>